<reference key="1">
    <citation type="journal article" date="1996" name="FEBS Lett.">
        <title>Characterization of multiple nicotinic acetylcholine receptor-binding proteins and phospholipases A2 from the venom of the coral snake Micrurus nigrocinctus.</title>
        <authorList>
            <person name="Alape-Giron A."/>
            <person name="Persson B."/>
            <person name="Cedelund E."/>
            <person name="Flores-Diaz M."/>
            <person name="Gutierrez J.-M."/>
            <person name="Thelestam M."/>
            <person name="Bergman T."/>
            <person name="Joernvall H."/>
        </authorList>
    </citation>
    <scope>PROTEIN SEQUENCE</scope>
    <scope>FUNCTION</scope>
    <scope>SUBCELLULAR LOCATION</scope>
    <source>
        <tissue>Venom</tissue>
    </source>
</reference>
<accession>Q9PRQ3</accession>
<feature type="chain" id="PRO_0000408024" description="Nicotinic acetylcholine receptor-binding protein Mnn-3C" evidence="2">
    <location>
        <begin position="1"/>
        <end position="28" status="greater than"/>
    </location>
</feature>
<feature type="disulfide bond" evidence="1">
    <location>
        <begin position="3"/>
        <end position="24"/>
    </location>
</feature>
<feature type="unsure residue" description="Assigned by comparison with orthologs">
    <location>
        <position position="3"/>
    </location>
</feature>
<feature type="unsure residue" description="Assigned by comparison with orthologs">
    <location>
        <position position="17"/>
    </location>
</feature>
<feature type="unsure residue" description="Assigned by comparison with orthologs">
    <location>
        <position position="24"/>
    </location>
</feature>
<feature type="non-terminal residue">
    <location>
        <position position="28"/>
    </location>
</feature>
<sequence>KKCLTKYSAGLQTSQTCPAGQKICFKKW</sequence>
<proteinExistence type="evidence at protein level"/>
<dbReference type="PIR" id="S68643">
    <property type="entry name" value="S68643"/>
</dbReference>
<dbReference type="SMR" id="Q9PRQ3"/>
<dbReference type="GO" id="GO:0005576">
    <property type="term" value="C:extracellular region"/>
    <property type="evidence" value="ECO:0007669"/>
    <property type="project" value="UniProtKB-SubCell"/>
</dbReference>
<dbReference type="GO" id="GO:0030550">
    <property type="term" value="F:acetylcholine receptor inhibitor activity"/>
    <property type="evidence" value="ECO:0007669"/>
    <property type="project" value="UniProtKB-KW"/>
</dbReference>
<dbReference type="GO" id="GO:0099106">
    <property type="term" value="F:ion channel regulator activity"/>
    <property type="evidence" value="ECO:0007669"/>
    <property type="project" value="UniProtKB-KW"/>
</dbReference>
<dbReference type="GO" id="GO:0090729">
    <property type="term" value="F:toxin activity"/>
    <property type="evidence" value="ECO:0007669"/>
    <property type="project" value="UniProtKB-KW"/>
</dbReference>
<dbReference type="Gene3D" id="2.10.60.10">
    <property type="entry name" value="CD59"/>
    <property type="match status" value="1"/>
</dbReference>
<dbReference type="InterPro" id="IPR045860">
    <property type="entry name" value="Snake_toxin-like_sf"/>
</dbReference>
<dbReference type="SUPFAM" id="SSF57302">
    <property type="entry name" value="Snake toxin-like"/>
    <property type="match status" value="1"/>
</dbReference>
<keyword id="KW-0008">Acetylcholine receptor inhibiting toxin</keyword>
<keyword id="KW-0903">Direct protein sequencing</keyword>
<keyword id="KW-1015">Disulfide bond</keyword>
<keyword id="KW-0872">Ion channel impairing toxin</keyword>
<keyword id="KW-0528">Neurotoxin</keyword>
<keyword id="KW-0629">Postsynaptic neurotoxin</keyword>
<keyword id="KW-0964">Secreted</keyword>
<keyword id="KW-0800">Toxin</keyword>
<comment type="function">
    <text evidence="2">Binds and may inhibit nicotinic acetylcholine receptors (nAChR).</text>
</comment>
<comment type="subcellular location">
    <subcellularLocation>
        <location evidence="2">Secreted</location>
    </subcellularLocation>
</comment>
<comment type="tissue specificity">
    <text evidence="4">Expressed by the venom gland.</text>
</comment>
<comment type="similarity">
    <text evidence="4">Belongs to the three-finger toxin family. Short-chain subfamily.</text>
</comment>
<protein>
    <recommendedName>
        <fullName evidence="3">Nicotinic acetylcholine receptor-binding protein Mnn-3C</fullName>
    </recommendedName>
    <alternativeName>
        <fullName>Three-finger toxin</fullName>
        <shortName>3FTx</shortName>
    </alternativeName>
</protein>
<name>3SX3_MICNI</name>
<evidence type="ECO:0000250" key="1">
    <source>
        <dbReference type="UniProtKB" id="P60301"/>
    </source>
</evidence>
<evidence type="ECO:0000269" key="2">
    <source>
    </source>
</evidence>
<evidence type="ECO:0000303" key="3">
    <source>
    </source>
</evidence>
<evidence type="ECO:0000305" key="4"/>
<organism>
    <name type="scientific">Micrurus nigrocinctus</name>
    <name type="common">Central American coral snake</name>
    <name type="synonym">Gargantilla</name>
    <dbReference type="NCBI Taxonomy" id="8635"/>
    <lineage>
        <taxon>Eukaryota</taxon>
        <taxon>Metazoa</taxon>
        <taxon>Chordata</taxon>
        <taxon>Craniata</taxon>
        <taxon>Vertebrata</taxon>
        <taxon>Euteleostomi</taxon>
        <taxon>Lepidosauria</taxon>
        <taxon>Squamata</taxon>
        <taxon>Bifurcata</taxon>
        <taxon>Unidentata</taxon>
        <taxon>Episquamata</taxon>
        <taxon>Toxicofera</taxon>
        <taxon>Serpentes</taxon>
        <taxon>Colubroidea</taxon>
        <taxon>Elapidae</taxon>
        <taxon>Elapinae</taxon>
        <taxon>Micrurus</taxon>
    </lineage>
</organism>